<feature type="chain" id="PRO_0000433000" description="Cytokinin riboside 5'-monophosphate phosphoribohydrolase">
    <location>
        <begin position="1"/>
        <end position="187"/>
    </location>
</feature>
<feature type="binding site" evidence="1">
    <location>
        <position position="80"/>
    </location>
    <ligand>
        <name>substrate</name>
    </ligand>
</feature>
<feature type="binding site" evidence="1">
    <location>
        <begin position="98"/>
        <end position="99"/>
    </location>
    <ligand>
        <name>substrate</name>
    </ligand>
</feature>
<feature type="binding site" evidence="1">
    <location>
        <begin position="115"/>
        <end position="121"/>
    </location>
    <ligand>
        <name>substrate</name>
    </ligand>
</feature>
<feature type="binding site" evidence="1">
    <location>
        <position position="127"/>
    </location>
    <ligand>
        <name>substrate</name>
    </ligand>
</feature>
<feature type="cross-link" description="Isoglutamyl lysine isopeptide (Lys-Gln) (interchain with Q-Cter in protein Pup)" evidence="2">
    <location>
        <position position="74"/>
    </location>
</feature>
<feature type="mutagenesis site" description="Large decrease in catalytic activity." evidence="2">
    <original>M</original>
    <variation>A</variation>
    <location>
        <position position="54"/>
    </location>
</feature>
<feature type="mutagenesis site" description="Abrogates pupylation. This mutant accumulates in M.tuberculosis with a functional proteasome system and sensitizes M.tuberculosis to NO. Decrease in catalytic activity." evidence="2">
    <original>K</original>
    <variation>A</variation>
    <location>
        <position position="74"/>
    </location>
</feature>
<feature type="mutagenesis site" description="Large decrease in catalytic activity." evidence="2">
    <original>E</original>
    <variation>A</variation>
    <location>
        <position position="80"/>
    </location>
</feature>
<feature type="mutagenesis site" description="Loss of catalytic activity." evidence="2">
    <original>R</original>
    <variation>A</variation>
    <location>
        <position position="98"/>
    </location>
</feature>
<feature type="mutagenesis site" description="Loss of catalytic activity." evidence="2">
    <original>T</original>
    <variation>A</variation>
    <location>
        <position position="118"/>
    </location>
</feature>
<feature type="mutagenesis site" description="Loss of catalytic activity." evidence="2">
    <original>DE</original>
    <variation>AA</variation>
    <location>
        <begin position="120"/>
        <end position="121"/>
    </location>
</feature>
<organism>
    <name type="scientific">Mycobacterium tuberculosis (strain ATCC 25618 / H37Rv)</name>
    <dbReference type="NCBI Taxonomy" id="83332"/>
    <lineage>
        <taxon>Bacteria</taxon>
        <taxon>Bacillati</taxon>
        <taxon>Actinomycetota</taxon>
        <taxon>Actinomycetes</taxon>
        <taxon>Mycobacteriales</taxon>
        <taxon>Mycobacteriaceae</taxon>
        <taxon>Mycobacterium</taxon>
        <taxon>Mycobacterium tuberculosis complex</taxon>
    </lineage>
</organism>
<gene>
    <name evidence="3" type="primary">log</name>
    <name evidence="6" type="ordered locus">Rv1205</name>
    <name evidence="5" type="ordered locus">RVBD_1205</name>
    <name evidence="7" type="ORF">P425_01253</name>
</gene>
<proteinExistence type="evidence at protein level"/>
<evidence type="ECO:0000250" key="1">
    <source>
        <dbReference type="UniProtKB" id="B2HS63"/>
    </source>
</evidence>
<evidence type="ECO:0000269" key="2">
    <source>
    </source>
</evidence>
<evidence type="ECO:0000303" key="3">
    <source>
    </source>
</evidence>
<evidence type="ECO:0000305" key="4"/>
<evidence type="ECO:0000312" key="5">
    <source>
        <dbReference type="EMBL" id="AFN49109.1"/>
    </source>
</evidence>
<evidence type="ECO:0000312" key="6">
    <source>
        <dbReference type="EMBL" id="CCP43961.1"/>
    </source>
</evidence>
<evidence type="ECO:0000312" key="7">
    <source>
        <dbReference type="EMBL" id="KBJ36218.1"/>
    </source>
</evidence>
<reference key="1">
    <citation type="journal article" date="1998" name="Nature">
        <title>Deciphering the biology of Mycobacterium tuberculosis from the complete genome sequence.</title>
        <authorList>
            <person name="Cole S.T."/>
            <person name="Brosch R."/>
            <person name="Parkhill J."/>
            <person name="Garnier T."/>
            <person name="Churcher C.M."/>
            <person name="Harris D.E."/>
            <person name="Gordon S.V."/>
            <person name="Eiglmeier K."/>
            <person name="Gas S."/>
            <person name="Barry C.E. III"/>
            <person name="Tekaia F."/>
            <person name="Badcock K."/>
            <person name="Basham D."/>
            <person name="Brown D."/>
            <person name="Chillingworth T."/>
            <person name="Connor R."/>
            <person name="Davies R.M."/>
            <person name="Devlin K."/>
            <person name="Feltwell T."/>
            <person name="Gentles S."/>
            <person name="Hamlin N."/>
            <person name="Holroyd S."/>
            <person name="Hornsby T."/>
            <person name="Jagels K."/>
            <person name="Krogh A."/>
            <person name="McLean J."/>
            <person name="Moule S."/>
            <person name="Murphy L.D."/>
            <person name="Oliver S."/>
            <person name="Osborne J."/>
            <person name="Quail M.A."/>
            <person name="Rajandream M.A."/>
            <person name="Rogers J."/>
            <person name="Rutter S."/>
            <person name="Seeger K."/>
            <person name="Skelton S."/>
            <person name="Squares S."/>
            <person name="Squares R."/>
            <person name="Sulston J.E."/>
            <person name="Taylor K."/>
            <person name="Whitehead S."/>
            <person name="Barrell B.G."/>
        </authorList>
    </citation>
    <scope>NUCLEOTIDE SEQUENCE [LARGE SCALE GENOMIC DNA]</scope>
    <source>
        <strain>ATCC 25618 / H37Rv</strain>
    </source>
</reference>
<reference key="2">
    <citation type="submission" date="2013-11" db="EMBL/GenBank/DDBJ databases">
        <title>The genome sequence of Mycobacterium tuberculosis H37Rv.</title>
        <authorList>
            <consortium name="The Broad Institute Genome Sequencing Platform"/>
            <person name="Galagan J."/>
            <person name="Kreiswirth B."/>
            <person name="Dobos K."/>
            <person name="Fortune S."/>
            <person name="Fitzgerald M."/>
            <person name="Young S.K."/>
            <person name="Zeng Q."/>
            <person name="Gargeya S."/>
            <person name="Abouelleil A."/>
            <person name="Alvarado L."/>
            <person name="Berlin A.M."/>
            <person name="Chapman S.B."/>
            <person name="Gainer-Dewar J."/>
            <person name="Goldberg J."/>
            <person name="Gnerre S."/>
            <person name="Griggs A."/>
            <person name="Gujja S."/>
            <person name="Hansen M."/>
            <person name="Howarth C."/>
            <person name="Imamovic A."/>
            <person name="Larimer J."/>
            <person name="McCowan C."/>
            <person name="Murphy C."/>
            <person name="Pearson M."/>
            <person name="Poon T."/>
            <person name="Priest M."/>
            <person name="Roberts A."/>
            <person name="Saif S."/>
            <person name="Shea T."/>
            <person name="Sykes S."/>
            <person name="Wortman J."/>
            <person name="Nusbaum C."/>
            <person name="Birren B."/>
        </authorList>
    </citation>
    <scope>NUCLEOTIDE SEQUENCE [LARGE SCALE GENOMIC DNA]</scope>
    <source>
        <strain>ATCC 25618 / H37Rv</strain>
    </source>
</reference>
<reference key="3">
    <citation type="submission" date="2014-04" db="EMBL/GenBank/DDBJ databases">
        <title>The genome sequence of Mycobacterium tuberculosis H37Rv.</title>
        <authorList>
            <consortium name="The Broad Institute Genomics Platform"/>
            <consortium name="The Broad Institute Genome Sequencing Center for Infectious Disease"/>
            <person name="Earl A.M."/>
            <person name="Kreiswirth B."/>
            <person name="Gomez J."/>
            <person name="Victor T."/>
            <person name="Desjardins C."/>
            <person name="Abeel T."/>
            <person name="Young S."/>
            <person name="Zeng Q."/>
            <person name="Gargeya S."/>
            <person name="Abouelleil A."/>
            <person name="Alvarado L."/>
            <person name="Chapman S.B."/>
            <person name="Gainer-Dewar J."/>
            <person name="Goldberg J."/>
            <person name="Griggs A."/>
            <person name="Gujja S."/>
            <person name="Hansen M."/>
            <person name="Howarth C."/>
            <person name="Imamovic A."/>
            <person name="Larimer J."/>
            <person name="Murphy C."/>
            <person name="Naylor J."/>
            <person name="Pearson M."/>
            <person name="Poon T.W."/>
            <person name="Priest M."/>
            <person name="Roberts A."/>
            <person name="Saif S."/>
            <person name="Shea T."/>
            <person name="Sykes S."/>
            <person name="Wortman J."/>
            <person name="Nusbaum C."/>
            <person name="Birren B."/>
        </authorList>
    </citation>
    <scope>NUCLEOTIDE SEQUENCE [LARGE SCALE GENOMIC DNA]</scope>
    <source>
        <strain>ATCC 25618 / H37Rv</strain>
    </source>
</reference>
<reference key="4">
    <citation type="journal article" date="2011" name="Mol. Cell. Proteomics">
        <title>Proteogenomic analysis of Mycobacterium tuberculosis by high resolution mass spectrometry.</title>
        <authorList>
            <person name="Kelkar D.S."/>
            <person name="Kumar D."/>
            <person name="Kumar P."/>
            <person name="Balakrishnan L."/>
            <person name="Muthusamy B."/>
            <person name="Yadav A.K."/>
            <person name="Shrivastava P."/>
            <person name="Marimuthu A."/>
            <person name="Anand S."/>
            <person name="Sundaram H."/>
            <person name="Kingsbury R."/>
            <person name="Harsha H.C."/>
            <person name="Nair B."/>
            <person name="Prasad T.S."/>
            <person name="Chauhan D.S."/>
            <person name="Katoch K."/>
            <person name="Katoch V.M."/>
            <person name="Kumar P."/>
            <person name="Chaerkady R."/>
            <person name="Ramachandran S."/>
            <person name="Dash D."/>
            <person name="Pandey A."/>
        </authorList>
    </citation>
    <scope>IDENTIFICATION BY MASS SPECTROMETRY [LARGE SCALE ANALYSIS]</scope>
    <source>
        <strain>ATCC 25618 / H37Rv</strain>
    </source>
</reference>
<reference key="5">
    <citation type="journal article" date="2015" name="Mol. Cell">
        <title>Proteasomal control of cytokinin synthesis protects Mycobacterium tuberculosis against nitric oxide.</title>
        <authorList>
            <person name="Samanovic M.I."/>
            <person name="Tu S."/>
            <person name="Novak O."/>
            <person name="Iyer L.M."/>
            <person name="McAllister F.E."/>
            <person name="Aravind L."/>
            <person name="Gygi S.P."/>
            <person name="Hubbard S.R."/>
            <person name="Strnad M."/>
            <person name="Darwin K.H."/>
        </authorList>
    </citation>
    <scope>FUNCTION</scope>
    <scope>CATALYTIC ACTIVITY</scope>
    <scope>BIOPHYSICOCHEMICAL PROPERTIES</scope>
    <scope>SUBSTRATE SPECIFICITY</scope>
    <scope>PROTEASOME SUBSTRATE</scope>
    <scope>PUPYLATION AT LYS-74</scope>
    <scope>DISRUPTION PHENOTYPE</scope>
    <scope>MUTAGENESIS OF MET-54; LYS-74; GLU-80; ARG-98; 120-ASP-GLU-121 AND THR-118</scope>
    <scope>SUBUNIT</scope>
</reference>
<sequence length="187" mass="20014">MSAKIDITGDWTVAVYCAASPTHAELLELAAEVGAAIAGRGWTLVWGGGHVSAMGAVASAARACGGWTVGVIPKMLVYRELADHDADELIVTDTMWERKQIMEDRSDAFIVLPGGVGTLDELFDAWTDGYLGTHDKPIVMVDPWGHFDGLRAWLNGLLDTGYVSPTAMERLVVVDNVKDALRACAPS</sequence>
<comment type="function">
    <text evidence="2">Catalyzes the hydrolytic removal of ribose 5'-monophosphate from nitrogen N6-modified adenosines, the final step of bioactive cytokinin synthesis. Is involved in the synthesis of isopentenyladenine (iP) and 2-methylthio-iP (2MeS-iP), the most abundant cytokinins detected in M.tuberculosis lysates and supernatants. Is also able to convert trans-zeatin-riboside monophosphate (tZRMP) to trans-zeatin (tZ) in vitro; however, it may not be involved in the biosynthesis of this minor cytokinin in vivo. Accumulation of Rv1205 sensitizes M.tuberculosis to nitric oxide since cytokinin breakdown products synergize with NO to kill M.tuberculosis. Shows a slow AMP hydrolase activity, but is not able to hydrolyze ATP. Displays no lysine decarboxylase (LDC) activity (L-lysine conversion to cadaverine).</text>
</comment>
<comment type="catalytic activity">
    <reaction evidence="2">
        <text>N(6)-(dimethylallyl)adenosine 5'-phosphate + H2O = N(6)-dimethylallyladenine + D-ribose 5-phosphate</text>
        <dbReference type="Rhea" id="RHEA:48560"/>
        <dbReference type="ChEBI" id="CHEBI:15377"/>
        <dbReference type="ChEBI" id="CHEBI:17660"/>
        <dbReference type="ChEBI" id="CHEBI:57526"/>
        <dbReference type="ChEBI" id="CHEBI:78346"/>
        <dbReference type="EC" id="3.2.2.n1"/>
    </reaction>
</comment>
<comment type="catalytic activity">
    <reaction evidence="2">
        <text>9-ribosyl-trans-zeatin 5'-phosphate + H2O = trans-zeatin + D-ribose 5-phosphate</text>
        <dbReference type="Rhea" id="RHEA:48564"/>
        <dbReference type="ChEBI" id="CHEBI:15377"/>
        <dbReference type="ChEBI" id="CHEBI:16522"/>
        <dbReference type="ChEBI" id="CHEBI:78346"/>
        <dbReference type="ChEBI" id="CHEBI:87947"/>
        <dbReference type="EC" id="3.2.2.n1"/>
    </reaction>
</comment>
<comment type="biophysicochemical properties">
    <kinetics>
        <KM evidence="2">5.59 uM for isopentenyladenine riboside monophosphate (iPRMP)</KM>
        <KM evidence="2">73.06 uM for AMP</KM>
        <text evidence="2">kcat is 434.3 min(-1) for the hydrolysis of iPRMP. kcat is 2.27 min(-1) for the hydrolysis of AMP.</text>
    </kinetics>
</comment>
<comment type="subunit">
    <text evidence="2">Homodimer.</text>
</comment>
<comment type="PTM">
    <text evidence="2">Pupylated at Lys-74 by the prokaryotic ubiquitin-like protein Pup, which leads to its degradation by the proteasome. The proteasomal control of cytokinin synthesis is essential to protect M.tuberculosis against host-produced NO.</text>
</comment>
<comment type="disruption phenotype">
    <text evidence="2">Disruption of this gene suppresses the NO-sensitive phenotype of an mpa mutant, and therefore restores NO resistance to a proteasomal-degradation-deficient M.tuberculosis strain. In addition, the disruption mutation in Rv1205 partially rescues the defective growth of the mpa mutant in the lungs and spleens of mice. Strains lacking Rv1205 show a significant reduction in the amount of several cytokinins: iP levels are almost 30 times lower in mutant supernatants, along with a corresponding increase in the concentration of the cytokinin precursors, and the level of 2MeS-iP is reduced by almost two orders of magnitude in these strains.</text>
</comment>
<comment type="similarity">
    <text evidence="4">Belongs to the LOG family.</text>
</comment>
<accession>O05306</accession>
<accession>F2GFY3</accession>
<accession>I6XAX7</accession>
<accession>Q7D8M2</accession>
<protein>
    <recommendedName>
        <fullName evidence="3">Cytokinin riboside 5'-monophosphate phosphoribohydrolase</fullName>
        <ecNumber evidence="2">3.2.2.n1</ecNumber>
    </recommendedName>
    <alternativeName>
        <fullName evidence="3">Protein LONELY GUY homolog</fullName>
        <shortName evidence="3">LOG homolog</shortName>
    </alternativeName>
</protein>
<name>LOGH_MYCTU</name>
<keyword id="KW-0203">Cytokinin biosynthesis</keyword>
<keyword id="KW-0378">Hydrolase</keyword>
<keyword id="KW-1017">Isopeptide bond</keyword>
<keyword id="KW-1185">Reference proteome</keyword>
<keyword id="KW-0832">Ubl conjugation</keyword>
<dbReference type="EC" id="3.2.2.n1" evidence="2"/>
<dbReference type="EMBL" id="AL123456">
    <property type="protein sequence ID" value="CCP43961.1"/>
    <property type="molecule type" value="Genomic_DNA"/>
</dbReference>
<dbReference type="EMBL" id="CP003248">
    <property type="protein sequence ID" value="AFN49109.1"/>
    <property type="molecule type" value="Genomic_DNA"/>
</dbReference>
<dbReference type="EMBL" id="JLDD01000013">
    <property type="protein sequence ID" value="KBJ36218.1"/>
    <property type="molecule type" value="Genomic_DNA"/>
</dbReference>
<dbReference type="RefSeq" id="NP_215721.1">
    <property type="nucleotide sequence ID" value="NC_000962.3"/>
</dbReference>
<dbReference type="RefSeq" id="WP_003898770.1">
    <property type="nucleotide sequence ID" value="NZ_NVQJ01000039.1"/>
</dbReference>
<dbReference type="SMR" id="O05306"/>
<dbReference type="FunCoup" id="O05306">
    <property type="interactions" value="5"/>
</dbReference>
<dbReference type="STRING" id="83332.Rv1205"/>
<dbReference type="PaxDb" id="83332-Rv1205"/>
<dbReference type="DNASU" id="886075"/>
<dbReference type="GeneID" id="886075"/>
<dbReference type="KEGG" id="mtu:Rv1205"/>
<dbReference type="KEGG" id="mtv:RVBD_1205"/>
<dbReference type="PATRIC" id="fig|83332.111.peg.1347"/>
<dbReference type="TubercuList" id="Rv1205"/>
<dbReference type="eggNOG" id="COG1611">
    <property type="taxonomic scope" value="Bacteria"/>
</dbReference>
<dbReference type="HOGENOM" id="CLU_058336_4_0_11"/>
<dbReference type="InParanoid" id="O05306"/>
<dbReference type="OrthoDB" id="9801098at2"/>
<dbReference type="PhylomeDB" id="O05306"/>
<dbReference type="Proteomes" id="UP000001584">
    <property type="component" value="Chromosome"/>
</dbReference>
<dbReference type="GO" id="GO:0005829">
    <property type="term" value="C:cytosol"/>
    <property type="evidence" value="ECO:0000318"/>
    <property type="project" value="GO_Central"/>
</dbReference>
<dbReference type="GO" id="GO:0102682">
    <property type="term" value="F:cytokinin riboside 5'-monophosphate phosphoribohydrolase activity"/>
    <property type="evidence" value="ECO:0000318"/>
    <property type="project" value="GO_Central"/>
</dbReference>
<dbReference type="GO" id="GO:0016799">
    <property type="term" value="F:hydrolase activity, hydrolyzing N-glycosyl compounds"/>
    <property type="evidence" value="ECO:0000314"/>
    <property type="project" value="UniProtKB"/>
</dbReference>
<dbReference type="GO" id="GO:0009691">
    <property type="term" value="P:cytokinin biosynthetic process"/>
    <property type="evidence" value="ECO:0000314"/>
    <property type="project" value="UniProtKB"/>
</dbReference>
<dbReference type="Gene3D" id="3.40.50.450">
    <property type="match status" value="1"/>
</dbReference>
<dbReference type="InterPro" id="IPR005269">
    <property type="entry name" value="LOG"/>
</dbReference>
<dbReference type="InterPro" id="IPR031100">
    <property type="entry name" value="LOG_fam"/>
</dbReference>
<dbReference type="NCBIfam" id="TIGR00730">
    <property type="entry name" value="Rossman fold protein, TIGR00730 family"/>
    <property type="match status" value="1"/>
</dbReference>
<dbReference type="PANTHER" id="PTHR31223">
    <property type="entry name" value="LOG FAMILY PROTEIN YJL055W"/>
    <property type="match status" value="1"/>
</dbReference>
<dbReference type="PANTHER" id="PTHR31223:SF70">
    <property type="entry name" value="LOG FAMILY PROTEIN YJL055W"/>
    <property type="match status" value="1"/>
</dbReference>
<dbReference type="Pfam" id="PF03641">
    <property type="entry name" value="Lysine_decarbox"/>
    <property type="match status" value="1"/>
</dbReference>
<dbReference type="SUPFAM" id="SSF102405">
    <property type="entry name" value="MCP/YpsA-like"/>
    <property type="match status" value="1"/>
</dbReference>